<organism>
    <name type="scientific">Bacillus subtilis (strain 168)</name>
    <dbReference type="NCBI Taxonomy" id="224308"/>
    <lineage>
        <taxon>Bacteria</taxon>
        <taxon>Bacillati</taxon>
        <taxon>Bacillota</taxon>
        <taxon>Bacilli</taxon>
        <taxon>Bacillales</taxon>
        <taxon>Bacillaceae</taxon>
        <taxon>Bacillus</taxon>
    </lineage>
</organism>
<name>RL15_BACSU</name>
<feature type="chain" id="PRO_0000104674" description="Large ribosomal subunit protein uL15">
    <location>
        <begin position="1"/>
        <end position="146"/>
    </location>
</feature>
<feature type="region of interest" description="Disordered" evidence="2">
    <location>
        <begin position="1"/>
        <end position="57"/>
    </location>
</feature>
<feature type="compositionally biased region" description="Basic and acidic residues" evidence="2">
    <location>
        <begin position="1"/>
        <end position="13"/>
    </location>
</feature>
<feature type="compositionally biased region" description="Gly residues" evidence="2">
    <location>
        <begin position="21"/>
        <end position="31"/>
    </location>
</feature>
<feature type="compositionally biased region" description="Gly residues" evidence="2">
    <location>
        <begin position="42"/>
        <end position="52"/>
    </location>
</feature>
<feature type="helix" evidence="8">
    <location>
        <begin position="3"/>
        <end position="5"/>
    </location>
</feature>
<feature type="turn" evidence="9">
    <location>
        <begin position="10"/>
        <end position="12"/>
    </location>
</feature>
<feature type="strand" evidence="10">
    <location>
        <begin position="19"/>
        <end position="21"/>
    </location>
</feature>
<feature type="helix" evidence="11">
    <location>
        <begin position="23"/>
        <end position="25"/>
    </location>
</feature>
<feature type="turn" evidence="11">
    <location>
        <begin position="29"/>
        <end position="32"/>
    </location>
</feature>
<feature type="strand" evidence="11">
    <location>
        <begin position="35"/>
        <end position="37"/>
    </location>
</feature>
<feature type="helix" evidence="11">
    <location>
        <begin position="38"/>
        <end position="40"/>
    </location>
</feature>
<feature type="strand" evidence="7">
    <location>
        <begin position="41"/>
        <end position="43"/>
    </location>
</feature>
<feature type="strand" evidence="7">
    <location>
        <begin position="52"/>
        <end position="54"/>
    </location>
</feature>
<feature type="helix" evidence="11">
    <location>
        <begin position="57"/>
        <end position="60"/>
    </location>
</feature>
<feature type="strand" evidence="11">
    <location>
        <begin position="74"/>
        <end position="78"/>
    </location>
</feature>
<feature type="helix" evidence="11">
    <location>
        <begin position="79"/>
        <end position="82"/>
    </location>
</feature>
<feature type="strand" evidence="9">
    <location>
        <begin position="85"/>
        <end position="87"/>
    </location>
</feature>
<feature type="helix" evidence="11">
    <location>
        <begin position="93"/>
        <end position="98"/>
    </location>
</feature>
<feature type="strand" evidence="11">
    <location>
        <begin position="101"/>
        <end position="103"/>
    </location>
</feature>
<feature type="strand" evidence="11">
    <location>
        <begin position="109"/>
        <end position="112"/>
    </location>
</feature>
<feature type="strand" evidence="11">
    <location>
        <begin position="122"/>
        <end position="128"/>
    </location>
</feature>
<feature type="helix" evidence="11">
    <location>
        <begin position="130"/>
        <end position="138"/>
    </location>
</feature>
<feature type="strand" evidence="11">
    <location>
        <begin position="142"/>
        <end position="145"/>
    </location>
</feature>
<gene>
    <name evidence="1" type="primary">rplO</name>
    <name type="ordered locus">BSU01350</name>
</gene>
<protein>
    <recommendedName>
        <fullName evidence="1">Large ribosomal subunit protein uL15</fullName>
    </recommendedName>
    <alternativeName>
        <fullName evidence="4">50S ribosomal protein L15</fullName>
    </alternativeName>
</protein>
<proteinExistence type="evidence at protein level"/>
<comment type="function">
    <text evidence="1">Binds to the 23S rRNA.</text>
</comment>
<comment type="subunit">
    <text evidence="3">Part of the 50S ribosomal subunit.</text>
</comment>
<comment type="similarity">
    <text evidence="1">Belongs to the universal ribosomal protein uL15 family.</text>
</comment>
<keyword id="KW-0002">3D-structure</keyword>
<keyword id="KW-1185">Reference proteome</keyword>
<keyword id="KW-0687">Ribonucleoprotein</keyword>
<keyword id="KW-0689">Ribosomal protein</keyword>
<keyword id="KW-0694">RNA-binding</keyword>
<keyword id="KW-0699">rRNA-binding</keyword>
<dbReference type="EMBL" id="D00619">
    <property type="protein sequence ID" value="BAA00494.1"/>
    <property type="molecule type" value="Genomic_DNA"/>
</dbReference>
<dbReference type="EMBL" id="X51329">
    <property type="protein sequence ID" value="CAA35711.1"/>
    <property type="molecule type" value="Genomic_DNA"/>
</dbReference>
<dbReference type="EMBL" id="L47971">
    <property type="protein sequence ID" value="AAB06818.1"/>
    <property type="molecule type" value="Genomic_DNA"/>
</dbReference>
<dbReference type="EMBL" id="AL009126">
    <property type="protein sequence ID" value="CAB11911.1"/>
    <property type="molecule type" value="Genomic_DNA"/>
</dbReference>
<dbReference type="EMBL" id="M31102">
    <property type="protein sequence ID" value="AAB59117.1"/>
    <property type="molecule type" value="Genomic_DNA"/>
</dbReference>
<dbReference type="PIR" id="S12682">
    <property type="entry name" value="R5BSL5"/>
</dbReference>
<dbReference type="RefSeq" id="NP_388016.1">
    <property type="nucleotide sequence ID" value="NC_000964.3"/>
</dbReference>
<dbReference type="RefSeq" id="WP_003225819.1">
    <property type="nucleotide sequence ID" value="NZ_OZ025638.1"/>
</dbReference>
<dbReference type="PDB" id="3J3V">
    <property type="method" value="EM"/>
    <property type="resolution" value="13.30 A"/>
    <property type="chains" value="L=1-146"/>
</dbReference>
<dbReference type="PDB" id="3J3W">
    <property type="method" value="EM"/>
    <property type="resolution" value="10.70 A"/>
    <property type="chains" value="L=1-146"/>
</dbReference>
<dbReference type="PDB" id="3J9W">
    <property type="method" value="EM"/>
    <property type="resolution" value="3.90 A"/>
    <property type="chains" value="BO=1-146"/>
</dbReference>
<dbReference type="PDB" id="5NJT">
    <property type="method" value="EM"/>
    <property type="resolution" value="3.80 A"/>
    <property type="chains" value="e=1-146"/>
</dbReference>
<dbReference type="PDB" id="6HA1">
    <property type="method" value="EM"/>
    <property type="resolution" value="3.10 A"/>
    <property type="chains" value="L=1-146"/>
</dbReference>
<dbReference type="PDB" id="6HA8">
    <property type="method" value="EM"/>
    <property type="resolution" value="3.50 A"/>
    <property type="chains" value="L=1-146"/>
</dbReference>
<dbReference type="PDB" id="6HTQ">
    <property type="method" value="EM"/>
    <property type="resolution" value="4.50 A"/>
    <property type="chains" value="L=1-146"/>
</dbReference>
<dbReference type="PDB" id="6PPF">
    <property type="method" value="EM"/>
    <property type="resolution" value="3.40 A"/>
    <property type="chains" value="L=1-145"/>
</dbReference>
<dbReference type="PDB" id="6PPK">
    <property type="method" value="EM"/>
    <property type="resolution" value="4.40 A"/>
    <property type="chains" value="L=1-146"/>
</dbReference>
<dbReference type="PDB" id="6PVK">
    <property type="method" value="EM"/>
    <property type="resolution" value="3.40 A"/>
    <property type="chains" value="L=1-145"/>
</dbReference>
<dbReference type="PDB" id="6TNN">
    <property type="method" value="EM"/>
    <property type="resolution" value="3.07 A"/>
    <property type="chains" value="e=1-146"/>
</dbReference>
<dbReference type="PDB" id="6TPQ">
    <property type="method" value="EM"/>
    <property type="resolution" value="3.07 A"/>
    <property type="chains" value="e=1-146"/>
</dbReference>
<dbReference type="PDB" id="7AQC">
    <property type="method" value="EM"/>
    <property type="resolution" value="2.99 A"/>
    <property type="chains" value="L=1-146"/>
</dbReference>
<dbReference type="PDB" id="7AQD">
    <property type="method" value="EM"/>
    <property type="resolution" value="3.10 A"/>
    <property type="chains" value="L=1-146"/>
</dbReference>
<dbReference type="PDB" id="7AS8">
    <property type="method" value="EM"/>
    <property type="resolution" value="2.90 A"/>
    <property type="chains" value="P=1-146"/>
</dbReference>
<dbReference type="PDB" id="7AS9">
    <property type="method" value="EM"/>
    <property type="resolution" value="3.50 A"/>
    <property type="chains" value="P=1-146"/>
</dbReference>
<dbReference type="PDB" id="7O5B">
    <property type="method" value="EM"/>
    <property type="resolution" value="3.33 A"/>
    <property type="chains" value="i=1-146"/>
</dbReference>
<dbReference type="PDB" id="7OPE">
    <property type="method" value="EM"/>
    <property type="resolution" value="3.20 A"/>
    <property type="chains" value="P=1-146"/>
</dbReference>
<dbReference type="PDB" id="7QGU">
    <property type="method" value="EM"/>
    <property type="resolution" value="4.75 A"/>
    <property type="chains" value="L=1-146"/>
</dbReference>
<dbReference type="PDB" id="7QH4">
    <property type="method" value="EM"/>
    <property type="resolution" value="5.45 A"/>
    <property type="chains" value="L=1-146"/>
</dbReference>
<dbReference type="PDB" id="7QV1">
    <property type="method" value="EM"/>
    <property type="resolution" value="3.50 A"/>
    <property type="chains" value="L=1-146"/>
</dbReference>
<dbReference type="PDB" id="7QV2">
    <property type="method" value="EM"/>
    <property type="resolution" value="3.50 A"/>
    <property type="chains" value="L=1-146"/>
</dbReference>
<dbReference type="PDB" id="7QV3">
    <property type="method" value="EM"/>
    <property type="resolution" value="5.14 A"/>
    <property type="chains" value="L=1-146"/>
</dbReference>
<dbReference type="PDB" id="7S9U">
    <property type="method" value="EM"/>
    <property type="resolution" value="3.20 A"/>
    <property type="chains" value="L=1-146"/>
</dbReference>
<dbReference type="PDB" id="7SAE">
    <property type="method" value="EM"/>
    <property type="resolution" value="3.00 A"/>
    <property type="chains" value="L=1-146"/>
</dbReference>
<dbReference type="PDB" id="8BUU">
    <property type="method" value="EM"/>
    <property type="resolution" value="2.90 A"/>
    <property type="chains" value="L=1-146"/>
</dbReference>
<dbReference type="PDB" id="8QCQ">
    <property type="method" value="EM"/>
    <property type="resolution" value="2.30 A"/>
    <property type="chains" value="L=1-146"/>
</dbReference>
<dbReference type="PDB" id="8QPP">
    <property type="method" value="EM"/>
    <property type="resolution" value="3.40 A"/>
    <property type="chains" value="i=1-146"/>
</dbReference>
<dbReference type="PDB" id="8R55">
    <property type="method" value="EM"/>
    <property type="resolution" value="3.57 A"/>
    <property type="chains" value="i=1-146"/>
</dbReference>
<dbReference type="PDB" id="8S1P">
    <property type="method" value="EM"/>
    <property type="resolution" value="1.96 A"/>
    <property type="chains" value="L=1-146"/>
</dbReference>
<dbReference type="PDB" id="8S1U">
    <property type="method" value="EM"/>
    <property type="resolution" value="3.40 A"/>
    <property type="chains" value="L=1-146"/>
</dbReference>
<dbReference type="PDB" id="9BS0">
    <property type="method" value="EM"/>
    <property type="resolution" value="3.30 A"/>
    <property type="chains" value="I=1-146"/>
</dbReference>
<dbReference type="PDB" id="9BSL">
    <property type="method" value="EM"/>
    <property type="resolution" value="3.10 A"/>
    <property type="chains" value="I=1-146"/>
</dbReference>
<dbReference type="PDB" id="9BSS">
    <property type="method" value="EM"/>
    <property type="resolution" value="3.10 A"/>
    <property type="chains" value="I=1-146"/>
</dbReference>
<dbReference type="PDBsum" id="3J3V"/>
<dbReference type="PDBsum" id="3J3W"/>
<dbReference type="PDBsum" id="3J9W"/>
<dbReference type="PDBsum" id="5NJT"/>
<dbReference type="PDBsum" id="6HA1"/>
<dbReference type="PDBsum" id="6HA8"/>
<dbReference type="PDBsum" id="6HTQ"/>
<dbReference type="PDBsum" id="6PPF"/>
<dbReference type="PDBsum" id="6PPK"/>
<dbReference type="PDBsum" id="6PVK"/>
<dbReference type="PDBsum" id="6TNN"/>
<dbReference type="PDBsum" id="6TPQ"/>
<dbReference type="PDBsum" id="7AQC"/>
<dbReference type="PDBsum" id="7AQD"/>
<dbReference type="PDBsum" id="7AS8"/>
<dbReference type="PDBsum" id="7AS9"/>
<dbReference type="PDBsum" id="7O5B"/>
<dbReference type="PDBsum" id="7OPE"/>
<dbReference type="PDBsum" id="7QGU"/>
<dbReference type="PDBsum" id="7QH4"/>
<dbReference type="PDBsum" id="7QV1"/>
<dbReference type="PDBsum" id="7QV2"/>
<dbReference type="PDBsum" id="7QV3"/>
<dbReference type="PDBsum" id="7S9U"/>
<dbReference type="PDBsum" id="7SAE"/>
<dbReference type="PDBsum" id="8BUU"/>
<dbReference type="PDBsum" id="8QCQ"/>
<dbReference type="PDBsum" id="8QPP"/>
<dbReference type="PDBsum" id="8R55"/>
<dbReference type="PDBsum" id="8S1P"/>
<dbReference type="PDBsum" id="8S1U"/>
<dbReference type="PDBsum" id="9BS0"/>
<dbReference type="PDBsum" id="9BSL"/>
<dbReference type="PDBsum" id="9BSS"/>
<dbReference type="EMDB" id="EMD-0176"/>
<dbReference type="EMDB" id="EMD-0177"/>
<dbReference type="EMDB" id="EMD-0270"/>
<dbReference type="EMDB" id="EMD-10535"/>
<dbReference type="EMDB" id="EMD-10543"/>
<dbReference type="EMDB" id="EMD-11862"/>
<dbReference type="EMDB" id="EMD-11864"/>
<dbReference type="EMDB" id="EMD-11889"/>
<dbReference type="EMDB" id="EMD-11890"/>
<dbReference type="EMDB" id="EMD-12734"/>
<dbReference type="EMDB" id="EMD-13017"/>
<dbReference type="EMDB" id="EMD-14157"/>
<dbReference type="EMDB" id="EMD-14158"/>
<dbReference type="EMDB" id="EMD-14159"/>
<dbReference type="EMDB" id="EMD-16246"/>
<dbReference type="EMDB" id="EMD-18332"/>
<dbReference type="EMDB" id="EMD-19638"/>
<dbReference type="EMDB" id="EMD-19641"/>
<dbReference type="EMDB" id="EMD-3656"/>
<dbReference type="EMDB" id="EMD-44849"/>
<dbReference type="EMDB" id="EMD-44869"/>
<dbReference type="EMDB" id="EMD-44871"/>
<dbReference type="SMR" id="P19946"/>
<dbReference type="FunCoup" id="P19946">
    <property type="interactions" value="688"/>
</dbReference>
<dbReference type="IntAct" id="P19946">
    <property type="interactions" value="1"/>
</dbReference>
<dbReference type="STRING" id="224308.BSU01350"/>
<dbReference type="jPOST" id="P19946"/>
<dbReference type="PaxDb" id="224308-BSU01350"/>
<dbReference type="EnsemblBacteria" id="CAB11911">
    <property type="protein sequence ID" value="CAB11911"/>
    <property type="gene ID" value="BSU_01350"/>
</dbReference>
<dbReference type="GeneID" id="76985161"/>
<dbReference type="GeneID" id="935940"/>
<dbReference type="KEGG" id="bsu:BSU01350"/>
<dbReference type="PATRIC" id="fig|224308.179.peg.138"/>
<dbReference type="eggNOG" id="COG0200">
    <property type="taxonomic scope" value="Bacteria"/>
</dbReference>
<dbReference type="InParanoid" id="P19946"/>
<dbReference type="OrthoDB" id="9810293at2"/>
<dbReference type="PhylomeDB" id="P19946"/>
<dbReference type="BioCyc" id="BSUB:BSU01350-MONOMER"/>
<dbReference type="EvolutionaryTrace" id="P19946"/>
<dbReference type="PRO" id="PR:P19946"/>
<dbReference type="Proteomes" id="UP000001570">
    <property type="component" value="Chromosome"/>
</dbReference>
<dbReference type="GO" id="GO:0022625">
    <property type="term" value="C:cytosolic large ribosomal subunit"/>
    <property type="evidence" value="ECO:0000318"/>
    <property type="project" value="GO_Central"/>
</dbReference>
<dbReference type="GO" id="GO:0019843">
    <property type="term" value="F:rRNA binding"/>
    <property type="evidence" value="ECO:0007669"/>
    <property type="project" value="UniProtKB-UniRule"/>
</dbReference>
<dbReference type="GO" id="GO:0003735">
    <property type="term" value="F:structural constituent of ribosome"/>
    <property type="evidence" value="ECO:0000318"/>
    <property type="project" value="GO_Central"/>
</dbReference>
<dbReference type="GO" id="GO:0006412">
    <property type="term" value="P:translation"/>
    <property type="evidence" value="ECO:0007669"/>
    <property type="project" value="UniProtKB-UniRule"/>
</dbReference>
<dbReference type="FunFam" id="3.100.10.10:FF:000004">
    <property type="entry name" value="50S ribosomal protein L15"/>
    <property type="match status" value="1"/>
</dbReference>
<dbReference type="Gene3D" id="3.100.10.10">
    <property type="match status" value="1"/>
</dbReference>
<dbReference type="HAMAP" id="MF_01341">
    <property type="entry name" value="Ribosomal_uL15"/>
    <property type="match status" value="1"/>
</dbReference>
<dbReference type="InterPro" id="IPR030878">
    <property type="entry name" value="Ribosomal_uL15"/>
</dbReference>
<dbReference type="InterPro" id="IPR021131">
    <property type="entry name" value="Ribosomal_uL15/eL18"/>
</dbReference>
<dbReference type="InterPro" id="IPR036227">
    <property type="entry name" value="Ribosomal_uL15/eL18_sf"/>
</dbReference>
<dbReference type="InterPro" id="IPR005749">
    <property type="entry name" value="Ribosomal_uL15_bac-type"/>
</dbReference>
<dbReference type="InterPro" id="IPR001196">
    <property type="entry name" value="Ribosomal_uL15_CS"/>
</dbReference>
<dbReference type="NCBIfam" id="TIGR01071">
    <property type="entry name" value="rplO_bact"/>
    <property type="match status" value="1"/>
</dbReference>
<dbReference type="PANTHER" id="PTHR12934">
    <property type="entry name" value="50S RIBOSOMAL PROTEIN L15"/>
    <property type="match status" value="1"/>
</dbReference>
<dbReference type="PANTHER" id="PTHR12934:SF11">
    <property type="entry name" value="LARGE RIBOSOMAL SUBUNIT PROTEIN UL15M"/>
    <property type="match status" value="1"/>
</dbReference>
<dbReference type="Pfam" id="PF00828">
    <property type="entry name" value="Ribosomal_L27A"/>
    <property type="match status" value="1"/>
</dbReference>
<dbReference type="SUPFAM" id="SSF52080">
    <property type="entry name" value="Ribosomal proteins L15p and L18e"/>
    <property type="match status" value="1"/>
</dbReference>
<dbReference type="PROSITE" id="PS00475">
    <property type="entry name" value="RIBOSOMAL_L15"/>
    <property type="match status" value="1"/>
</dbReference>
<evidence type="ECO:0000255" key="1">
    <source>
        <dbReference type="HAMAP-Rule" id="MF_01341"/>
    </source>
</evidence>
<evidence type="ECO:0000256" key="2">
    <source>
        <dbReference type="SAM" id="MobiDB-lite"/>
    </source>
</evidence>
<evidence type="ECO:0000269" key="3">
    <source>
    </source>
</evidence>
<evidence type="ECO:0000305" key="4"/>
<evidence type="ECO:0007744" key="5">
    <source>
        <dbReference type="PDB" id="6HA1"/>
    </source>
</evidence>
<evidence type="ECO:0007744" key="6">
    <source>
        <dbReference type="PDB" id="6HA8"/>
    </source>
</evidence>
<evidence type="ECO:0007829" key="7">
    <source>
        <dbReference type="PDB" id="6TNN"/>
    </source>
</evidence>
<evidence type="ECO:0007829" key="8">
    <source>
        <dbReference type="PDB" id="6TPQ"/>
    </source>
</evidence>
<evidence type="ECO:0007829" key="9">
    <source>
        <dbReference type="PDB" id="7AQC"/>
    </source>
</evidence>
<evidence type="ECO:0007829" key="10">
    <source>
        <dbReference type="PDB" id="7S9U"/>
    </source>
</evidence>
<evidence type="ECO:0007829" key="11">
    <source>
        <dbReference type="PDB" id="8S1P"/>
    </source>
</evidence>
<reference key="1">
    <citation type="journal article" date="1990" name="J. Biochem.">
        <title>Cloning and characterization of a Bacillus subtilis gene homologous to E. coli secY.</title>
        <authorList>
            <person name="Nakamura K."/>
            <person name="Nakamura A."/>
            <person name="Takamatsu H."/>
            <person name="Yoshikawa H."/>
            <person name="Yamane K."/>
        </authorList>
    </citation>
    <scope>NUCLEOTIDE SEQUENCE [GENOMIC DNA]</scope>
</reference>
<reference key="2">
    <citation type="journal article" date="1990" name="Nucleic Acids Res.">
        <title>Sequence of the Bacillus subtilis spectinomycin resistance gene region.</title>
        <authorList>
            <person name="Yoshikawa H."/>
            <person name="Doi R.H."/>
        </authorList>
    </citation>
    <scope>NUCLEOTIDE SEQUENCE [GENOMIC DNA]</scope>
</reference>
<reference key="3">
    <citation type="journal article" date="1996" name="Gene">
        <title>Genetic and transcriptional organization of the Bacillus subtilis spc-alpha region.</title>
        <authorList>
            <person name="Suh J.-W."/>
            <person name="Boylan S.A."/>
            <person name="Oh S.H."/>
            <person name="Price C.W."/>
        </authorList>
    </citation>
    <scope>NUCLEOTIDE SEQUENCE [GENOMIC DNA]</scope>
    <source>
        <strain>168 / Marburg / ATCC 6051 / DSM 10 / JCM 1465 / NBRC 13719 / NCIMB 3610 / NRRL NRS-744 / VKM B-501</strain>
    </source>
</reference>
<reference key="4">
    <citation type="journal article" date="1997" name="Nature">
        <title>The complete genome sequence of the Gram-positive bacterium Bacillus subtilis.</title>
        <authorList>
            <person name="Kunst F."/>
            <person name="Ogasawara N."/>
            <person name="Moszer I."/>
            <person name="Albertini A.M."/>
            <person name="Alloni G."/>
            <person name="Azevedo V."/>
            <person name="Bertero M.G."/>
            <person name="Bessieres P."/>
            <person name="Bolotin A."/>
            <person name="Borchert S."/>
            <person name="Borriss R."/>
            <person name="Boursier L."/>
            <person name="Brans A."/>
            <person name="Braun M."/>
            <person name="Brignell S.C."/>
            <person name="Bron S."/>
            <person name="Brouillet S."/>
            <person name="Bruschi C.V."/>
            <person name="Caldwell B."/>
            <person name="Capuano V."/>
            <person name="Carter N.M."/>
            <person name="Choi S.-K."/>
            <person name="Codani J.-J."/>
            <person name="Connerton I.F."/>
            <person name="Cummings N.J."/>
            <person name="Daniel R.A."/>
            <person name="Denizot F."/>
            <person name="Devine K.M."/>
            <person name="Duesterhoeft A."/>
            <person name="Ehrlich S.D."/>
            <person name="Emmerson P.T."/>
            <person name="Entian K.-D."/>
            <person name="Errington J."/>
            <person name="Fabret C."/>
            <person name="Ferrari E."/>
            <person name="Foulger D."/>
            <person name="Fritz C."/>
            <person name="Fujita M."/>
            <person name="Fujita Y."/>
            <person name="Fuma S."/>
            <person name="Galizzi A."/>
            <person name="Galleron N."/>
            <person name="Ghim S.-Y."/>
            <person name="Glaser P."/>
            <person name="Goffeau A."/>
            <person name="Golightly E.J."/>
            <person name="Grandi G."/>
            <person name="Guiseppi G."/>
            <person name="Guy B.J."/>
            <person name="Haga K."/>
            <person name="Haiech J."/>
            <person name="Harwood C.R."/>
            <person name="Henaut A."/>
            <person name="Hilbert H."/>
            <person name="Holsappel S."/>
            <person name="Hosono S."/>
            <person name="Hullo M.-F."/>
            <person name="Itaya M."/>
            <person name="Jones L.-M."/>
            <person name="Joris B."/>
            <person name="Karamata D."/>
            <person name="Kasahara Y."/>
            <person name="Klaerr-Blanchard M."/>
            <person name="Klein C."/>
            <person name="Kobayashi Y."/>
            <person name="Koetter P."/>
            <person name="Koningstein G."/>
            <person name="Krogh S."/>
            <person name="Kumano M."/>
            <person name="Kurita K."/>
            <person name="Lapidus A."/>
            <person name="Lardinois S."/>
            <person name="Lauber J."/>
            <person name="Lazarevic V."/>
            <person name="Lee S.-M."/>
            <person name="Levine A."/>
            <person name="Liu H."/>
            <person name="Masuda S."/>
            <person name="Mauel C."/>
            <person name="Medigue C."/>
            <person name="Medina N."/>
            <person name="Mellado R.P."/>
            <person name="Mizuno M."/>
            <person name="Moestl D."/>
            <person name="Nakai S."/>
            <person name="Noback M."/>
            <person name="Noone D."/>
            <person name="O'Reilly M."/>
            <person name="Ogawa K."/>
            <person name="Ogiwara A."/>
            <person name="Oudega B."/>
            <person name="Park S.-H."/>
            <person name="Parro V."/>
            <person name="Pohl T.M."/>
            <person name="Portetelle D."/>
            <person name="Porwollik S."/>
            <person name="Prescott A.M."/>
            <person name="Presecan E."/>
            <person name="Pujic P."/>
            <person name="Purnelle B."/>
            <person name="Rapoport G."/>
            <person name="Rey M."/>
            <person name="Reynolds S."/>
            <person name="Rieger M."/>
            <person name="Rivolta C."/>
            <person name="Rocha E."/>
            <person name="Roche B."/>
            <person name="Rose M."/>
            <person name="Sadaie Y."/>
            <person name="Sato T."/>
            <person name="Scanlan E."/>
            <person name="Schleich S."/>
            <person name="Schroeter R."/>
            <person name="Scoffone F."/>
            <person name="Sekiguchi J."/>
            <person name="Sekowska A."/>
            <person name="Seror S.J."/>
            <person name="Serror P."/>
            <person name="Shin B.-S."/>
            <person name="Soldo B."/>
            <person name="Sorokin A."/>
            <person name="Tacconi E."/>
            <person name="Takagi T."/>
            <person name="Takahashi H."/>
            <person name="Takemaru K."/>
            <person name="Takeuchi M."/>
            <person name="Tamakoshi A."/>
            <person name="Tanaka T."/>
            <person name="Terpstra P."/>
            <person name="Tognoni A."/>
            <person name="Tosato V."/>
            <person name="Uchiyama S."/>
            <person name="Vandenbol M."/>
            <person name="Vannier F."/>
            <person name="Vassarotti A."/>
            <person name="Viari A."/>
            <person name="Wambutt R."/>
            <person name="Wedler E."/>
            <person name="Wedler H."/>
            <person name="Weitzenegger T."/>
            <person name="Winters P."/>
            <person name="Wipat A."/>
            <person name="Yamamoto H."/>
            <person name="Yamane K."/>
            <person name="Yasumoto K."/>
            <person name="Yata K."/>
            <person name="Yoshida K."/>
            <person name="Yoshikawa H.-F."/>
            <person name="Zumstein E."/>
            <person name="Yoshikawa H."/>
            <person name="Danchin A."/>
        </authorList>
    </citation>
    <scope>NUCLEOTIDE SEQUENCE [LARGE SCALE GENOMIC DNA]</scope>
    <source>
        <strain>168</strain>
    </source>
</reference>
<reference key="5">
    <citation type="journal article" date="1990" name="Mol. Microbiol.">
        <title>Isolation of a secY homologue from Bacillus subtilis: evidence for a common protein export pathway in eubacteria.</title>
        <authorList>
            <person name="Suh J.-W."/>
            <person name="Boylan S.A."/>
            <person name="Thomas S.M."/>
            <person name="Dolan K.M."/>
            <person name="Oliver D.B."/>
            <person name="Price C.W."/>
        </authorList>
    </citation>
    <scope>NUCLEOTIDE SEQUENCE [GENOMIC DNA] OF 94-146</scope>
    <source>
        <strain>168</strain>
    </source>
</reference>
<reference evidence="5 6" key="6">
    <citation type="journal article" date="2018" name="Proc. Natl. Acad. Sci. U.S.A.">
        <title>Structural basis for antibiotic resistance mediated by the Bacillus subtilis ABCF ATPase VmlR.</title>
        <authorList>
            <person name="Crowe-McAuliffe C."/>
            <person name="Graf M."/>
            <person name="Huter P."/>
            <person name="Takada H."/>
            <person name="Abdelshahid M."/>
            <person name="Novacek J."/>
            <person name="Murina V."/>
            <person name="Atkinson G.C."/>
            <person name="Hauryliuk V."/>
            <person name="Wilson D.N."/>
        </authorList>
    </citation>
    <scope>STRUCTURE BY ELECTRON MICROSCOPY (3.10 ANGSTROMS) OF 1-146 WITH AND WITHOUT VIRGINIAMYCIN M</scope>
</reference>
<accession>P19946</accession>
<sequence>MKLHELKPSEGSRKTRNRVGRGIGSGNGKTAGKGHKGQNARSGGGVRPGFEGGQMPLFQRLPKRGFTNINRKEYAVVNLDKLNGFAEGTEVTPELLLETGVISKLNAGVKILGNGKLEKKLTVKANKFSASAKEAVEAAGGTAEVI</sequence>